<name>GLND_AZOBR</name>
<sequence>MLSTRAASADASDAKDAGTANIPNKRAILSRRKLAEDLETLVAEHGTGDKLRPALIARLRGALNDGRAEVRARFEAKGSGEDCVRQNCYLADGVVRSLADLTVTHIFPTPNPTSGEVFDIVATGGYGRGELAPFSDIDLLFLLPYKRTPRVEQVVEYMLYILWDLGLKVGHAVRSVDDCIRQSKADVTIRTAILESRYLWGPRKLFHRLRRRFDREVVAGTGPEFVEAKLAERDNRHLKLGDSAYVLEPNLKDGKGGLRDLQTLFWIAKYLYRVEDVDDLVGKKVLLPEEAHGFAKAQNFLWTARCHLHYLTGRMEDRMTFDVQTSIGNRMGYTDHAGTKGVERFMKHYFLVAKDVGDLTRIFCAALEAESKRPPKFNILRLAALARRKDVDGFVVDGERLNVRSDRQFKDEPLDMIRLFHTAQQNDIDIHPNALRAITRSLSVVGPKLRADPEANRLFLEILTGRKDPEITLRRMNEAGVLARFIPDFGRVVAQMQYDMYHVYTVDEHTLFALGILHKIEMGELTDELPLSSEVIHKVVSRRALYVAVLLHDIAKGRGGDHSILGARVAEKLCPRLGLTAEETETVAWLVRWHLAMSYTAFKRDLEDDKTVRDFVSLVQSPERLRLLLVLTVADIRAVGPQRWNNWKATLLRELYNRSEEVMSGGLSVEGRGRRIQAAQAALRDELSDFDAADFERHLALGYPAYWLAFDAETLGRQARLVRGRLRDERPLTVNTRIDRGRAITEVTIFATDHHGLFSRLAGALAAAGADIVDARIFTMTNGMALDVFTVQDAAGGGAFESGDKLAKLSVMIEKVLSGQLKPLHDLTKRKAPHASRTRVFHVPPRVLIDNNASTTHTVIEVNGRDRPGLLYDLTRALTNLTLQISSAKISTYGEKAIDVFYVKDVFGLKVTHENKLAQIRERLLHALADPSA</sequence>
<organism>
    <name type="scientific">Azospirillum brasilense</name>
    <dbReference type="NCBI Taxonomy" id="192"/>
    <lineage>
        <taxon>Bacteria</taxon>
        <taxon>Pseudomonadati</taxon>
        <taxon>Pseudomonadota</taxon>
        <taxon>Alphaproteobacteria</taxon>
        <taxon>Rhodospirillales</taxon>
        <taxon>Azospirillaceae</taxon>
        <taxon>Azospirillum</taxon>
    </lineage>
</organism>
<proteinExistence type="evidence at protein level"/>
<gene>
    <name evidence="1" type="primary">glnD</name>
</gene>
<keyword id="KW-0378">Hydrolase</keyword>
<keyword id="KW-0460">Magnesium</keyword>
<keyword id="KW-0511">Multifunctional enzyme</keyword>
<keyword id="KW-0535">Nitrogen fixation</keyword>
<keyword id="KW-0548">Nucleotidyltransferase</keyword>
<keyword id="KW-0677">Repeat</keyword>
<keyword id="KW-0808">Transferase</keyword>
<reference key="1">
    <citation type="journal article" date="2002" name="Mol. Gen. Genet.">
        <title>Cloning and characterization of the Azospirillum brasilense glnD gene and analysis of a glnD mutant.</title>
        <authorList>
            <person name="Van Dommelen A."/>
            <person name="Keijers V."/>
            <person name="Somers E."/>
            <person name="Vanderleyden J."/>
        </authorList>
    </citation>
    <scope>NUCLEOTIDE SEQUENCE [GENOMIC DNA]</scope>
    <source>
        <strain>ATCC 29145 / DSM 1690 / IMET 11303 / Sp7</strain>
    </source>
</reference>
<reference key="2">
    <citation type="journal article" date="2008" name="Braz. J. Med. Biol. Res.">
        <title>Different responses of the GlnB and GlnZ proteins upon in vitro uridylylation by the Azospirillum brasilense GlnD protein.</title>
        <authorList>
            <person name="Araujo L.M."/>
            <person name="Huergo L.F."/>
            <person name="Invitti A.L."/>
            <person name="Gimenes C.I."/>
            <person name="Bonatto A.C."/>
            <person name="Monteiro R.A."/>
            <person name="Souza E.M."/>
            <person name="Pedrosa F.O."/>
            <person name="Chubatsu L.S."/>
        </authorList>
    </citation>
    <scope>FUNCTION</scope>
    <scope>CATALYTIC ACTIVITY</scope>
    <scope>ACTIVITY REGULATION</scope>
    <source>
        <strain>FP2</strain>
    </source>
</reference>
<comment type="function">
    <text evidence="3">Modifies, by uridylylation and deuridylylation, the PII regulatory proteins GlnB and GlnZ, in response to the nitrogen status of the cell that GlnD senses through the glutamine level. Under low glutamine levels, catalyzes the conversion of the PII proteins and UTP to PII-UMP and PPi, while under higher glutamine levels, GlnD hydrolyzes PII-UMP to PII and UMP (deuridylylation). Thus, controls uridylylation state and activity of the PII proteins, and plays an important role in the regulation of nitrogen fixation and metabolism.</text>
</comment>
<comment type="catalytic activity">
    <reaction evidence="1 3">
        <text>[protein-PII]-L-tyrosine + UTP = [protein-PII]-uridylyl-L-tyrosine + diphosphate</text>
        <dbReference type="Rhea" id="RHEA:13673"/>
        <dbReference type="Rhea" id="RHEA-COMP:12147"/>
        <dbReference type="Rhea" id="RHEA-COMP:12148"/>
        <dbReference type="ChEBI" id="CHEBI:33019"/>
        <dbReference type="ChEBI" id="CHEBI:46398"/>
        <dbReference type="ChEBI" id="CHEBI:46858"/>
        <dbReference type="ChEBI" id="CHEBI:90602"/>
        <dbReference type="EC" id="2.7.7.59"/>
    </reaction>
</comment>
<comment type="catalytic activity">
    <reaction evidence="1 3">
        <text>[protein-PII]-uridylyl-L-tyrosine + H2O = [protein-PII]-L-tyrosine + UMP + H(+)</text>
        <dbReference type="Rhea" id="RHEA:48600"/>
        <dbReference type="Rhea" id="RHEA-COMP:12147"/>
        <dbReference type="Rhea" id="RHEA-COMP:12148"/>
        <dbReference type="ChEBI" id="CHEBI:15377"/>
        <dbReference type="ChEBI" id="CHEBI:15378"/>
        <dbReference type="ChEBI" id="CHEBI:46858"/>
        <dbReference type="ChEBI" id="CHEBI:57865"/>
        <dbReference type="ChEBI" id="CHEBI:90602"/>
    </reaction>
</comment>
<comment type="cofactor">
    <cofactor evidence="1">
        <name>Mg(2+)</name>
        <dbReference type="ChEBI" id="CHEBI:18420"/>
    </cofactor>
</comment>
<comment type="activity regulation">
    <text evidence="1 3">Uridylyltransferase (UTase) activity is inhibited by glutamine, while glutamine activates uridylyl-removing (UR) activity. Uridylylation process is dependent on ATP and 2-oxoglutarate, which are effector molecules that likely bind to PII proteins and control their activity.</text>
</comment>
<comment type="domain">
    <text evidence="1">Has four distinct domains: an N-terminal nucleotidyltransferase (NT) domain responsible for UTase activity, a central HD domain that encodes UR activity, and two C-terminal ACT domains that seem to have a role in glutamine sensing.</text>
</comment>
<comment type="similarity">
    <text evidence="1">Belongs to the GlnD family.</text>
</comment>
<protein>
    <recommendedName>
        <fullName evidence="1">Bifunctional uridylyltransferase/uridylyl-removing enzyme</fullName>
        <shortName evidence="1">UTase/UR</shortName>
    </recommendedName>
    <alternativeName>
        <fullName evidence="1">Bifunctional [protein-PII] modification enzyme</fullName>
    </alternativeName>
    <alternativeName>
        <fullName evidence="1">Bifunctional nitrogen sensor protein</fullName>
    </alternativeName>
    <domain>
        <recommendedName>
            <fullName evidence="1">[Protein-PII] uridylyltransferase</fullName>
            <shortName evidence="1">PII uridylyltransferase</shortName>
            <shortName evidence="1">UTase</shortName>
            <ecNumber evidence="1">2.7.7.59</ecNumber>
        </recommendedName>
    </domain>
    <domain>
        <recommendedName>
            <fullName evidence="1">[Protein-PII]-UMP uridylyl-removing enzyme</fullName>
            <shortName evidence="1">UR</shortName>
            <ecNumber evidence="1">3.1.4.-</ecNumber>
        </recommendedName>
    </domain>
</protein>
<evidence type="ECO:0000255" key="1">
    <source>
        <dbReference type="HAMAP-Rule" id="MF_00277"/>
    </source>
</evidence>
<evidence type="ECO:0000255" key="2">
    <source>
        <dbReference type="PROSITE-ProRule" id="PRU01175"/>
    </source>
</evidence>
<evidence type="ECO:0000269" key="3">
    <source>
    </source>
</evidence>
<dbReference type="EC" id="2.7.7.59" evidence="1"/>
<dbReference type="EC" id="3.1.4.-" evidence="1"/>
<dbReference type="EMBL" id="AF149716">
    <property type="protein sequence ID" value="AAL87737.1"/>
    <property type="molecule type" value="Genomic_DNA"/>
</dbReference>
<dbReference type="SMR" id="Q8RQD1"/>
<dbReference type="BRENDA" id="2.7.7.59">
    <property type="organism ID" value="611"/>
</dbReference>
<dbReference type="GO" id="GO:0008773">
    <property type="term" value="F:[protein-PII] uridylyltransferase activity"/>
    <property type="evidence" value="ECO:0007669"/>
    <property type="project" value="UniProtKB-UniRule"/>
</dbReference>
<dbReference type="GO" id="GO:0008081">
    <property type="term" value="F:phosphoric diester hydrolase activity"/>
    <property type="evidence" value="ECO:0007669"/>
    <property type="project" value="UniProtKB-UniRule"/>
</dbReference>
<dbReference type="GO" id="GO:0009399">
    <property type="term" value="P:nitrogen fixation"/>
    <property type="evidence" value="ECO:0007669"/>
    <property type="project" value="UniProtKB-KW"/>
</dbReference>
<dbReference type="GO" id="GO:0006808">
    <property type="term" value="P:regulation of nitrogen utilization"/>
    <property type="evidence" value="ECO:0007669"/>
    <property type="project" value="UniProtKB-UniRule"/>
</dbReference>
<dbReference type="CDD" id="cd04899">
    <property type="entry name" value="ACT_ACR-UUR-like_2"/>
    <property type="match status" value="1"/>
</dbReference>
<dbReference type="CDD" id="cd04900">
    <property type="entry name" value="ACT_UUR-like_1"/>
    <property type="match status" value="1"/>
</dbReference>
<dbReference type="CDD" id="cd00077">
    <property type="entry name" value="HDc"/>
    <property type="match status" value="1"/>
</dbReference>
<dbReference type="CDD" id="cd05401">
    <property type="entry name" value="NT_GlnE_GlnD_like"/>
    <property type="match status" value="1"/>
</dbReference>
<dbReference type="Gene3D" id="3.30.70.260">
    <property type="match status" value="1"/>
</dbReference>
<dbReference type="Gene3D" id="3.30.460.10">
    <property type="entry name" value="Beta Polymerase, domain 2"/>
    <property type="match status" value="1"/>
</dbReference>
<dbReference type="Gene3D" id="1.10.3090.10">
    <property type="entry name" value="cca-adding enzyme, domain 2"/>
    <property type="match status" value="1"/>
</dbReference>
<dbReference type="HAMAP" id="MF_00277">
    <property type="entry name" value="PII_uridylyl_transf"/>
    <property type="match status" value="1"/>
</dbReference>
<dbReference type="InterPro" id="IPR045865">
    <property type="entry name" value="ACT-like_dom_sf"/>
</dbReference>
<dbReference type="InterPro" id="IPR002912">
    <property type="entry name" value="ACT_dom"/>
</dbReference>
<dbReference type="InterPro" id="IPR003607">
    <property type="entry name" value="HD/PDEase_dom"/>
</dbReference>
<dbReference type="InterPro" id="IPR006674">
    <property type="entry name" value="HD_domain"/>
</dbReference>
<dbReference type="InterPro" id="IPR043519">
    <property type="entry name" value="NT_sf"/>
</dbReference>
<dbReference type="InterPro" id="IPR013546">
    <property type="entry name" value="PII_UdlTrfase/GS_AdlTrfase"/>
</dbReference>
<dbReference type="InterPro" id="IPR002934">
    <property type="entry name" value="Polymerase_NTP_transf_dom"/>
</dbReference>
<dbReference type="InterPro" id="IPR010043">
    <property type="entry name" value="UTase/UR"/>
</dbReference>
<dbReference type="NCBIfam" id="NF003467">
    <property type="entry name" value="PRK05092.1"/>
    <property type="match status" value="1"/>
</dbReference>
<dbReference type="NCBIfam" id="TIGR01693">
    <property type="entry name" value="UTase_glnD"/>
    <property type="match status" value="1"/>
</dbReference>
<dbReference type="PANTHER" id="PTHR47320">
    <property type="entry name" value="BIFUNCTIONAL URIDYLYLTRANSFERASE/URIDYLYL-REMOVING ENZYME"/>
    <property type="match status" value="1"/>
</dbReference>
<dbReference type="PANTHER" id="PTHR47320:SF1">
    <property type="entry name" value="BIFUNCTIONAL URIDYLYLTRANSFERASE_URIDYLYL-REMOVING ENZYME"/>
    <property type="match status" value="1"/>
</dbReference>
<dbReference type="Pfam" id="PF24931">
    <property type="entry name" value="ACT_ACR9_3rd"/>
    <property type="match status" value="1"/>
</dbReference>
<dbReference type="Pfam" id="PF08335">
    <property type="entry name" value="GlnD_UR_UTase"/>
    <property type="match status" value="1"/>
</dbReference>
<dbReference type="Pfam" id="PF01966">
    <property type="entry name" value="HD"/>
    <property type="match status" value="1"/>
</dbReference>
<dbReference type="Pfam" id="PF01909">
    <property type="entry name" value="NTP_transf_2"/>
    <property type="match status" value="1"/>
</dbReference>
<dbReference type="PIRSF" id="PIRSF006288">
    <property type="entry name" value="PII_uridyltransf"/>
    <property type="match status" value="1"/>
</dbReference>
<dbReference type="SMART" id="SM00471">
    <property type="entry name" value="HDc"/>
    <property type="match status" value="1"/>
</dbReference>
<dbReference type="SUPFAM" id="SSF55021">
    <property type="entry name" value="ACT-like"/>
    <property type="match status" value="2"/>
</dbReference>
<dbReference type="SUPFAM" id="SSF81301">
    <property type="entry name" value="Nucleotidyltransferase"/>
    <property type="match status" value="1"/>
</dbReference>
<dbReference type="SUPFAM" id="SSF81593">
    <property type="entry name" value="Nucleotidyltransferase substrate binding subunit/domain"/>
    <property type="match status" value="1"/>
</dbReference>
<dbReference type="SUPFAM" id="SSF81891">
    <property type="entry name" value="Poly A polymerase C-terminal region-like"/>
    <property type="match status" value="1"/>
</dbReference>
<dbReference type="PROSITE" id="PS51671">
    <property type="entry name" value="ACT"/>
    <property type="match status" value="2"/>
</dbReference>
<dbReference type="PROSITE" id="PS51831">
    <property type="entry name" value="HD"/>
    <property type="match status" value="1"/>
</dbReference>
<feature type="chain" id="PRO_0000192716" description="Bifunctional uridylyltransferase/uridylyl-removing enzyme">
    <location>
        <begin position="1"/>
        <end position="933"/>
    </location>
</feature>
<feature type="domain" description="HD" evidence="2">
    <location>
        <begin position="506"/>
        <end position="628"/>
    </location>
</feature>
<feature type="domain" description="ACT 1" evidence="1">
    <location>
        <begin position="746"/>
        <end position="829"/>
    </location>
</feature>
<feature type="domain" description="ACT 2" evidence="1">
    <location>
        <begin position="859"/>
        <end position="933"/>
    </location>
</feature>
<feature type="region of interest" description="Uridylyltransferase">
    <location>
        <begin position="1"/>
        <end position="390"/>
    </location>
</feature>
<feature type="region of interest" description="Uridylyl-removing">
    <location>
        <begin position="391"/>
        <end position="745"/>
    </location>
</feature>
<accession>Q8RQD1</accession>